<proteinExistence type="evidence at protein level"/>
<gene>
    <name type="ORF">SPAC22H10.11c</name>
</gene>
<accession>Q10304</accession>
<sequence length="629" mass="71267">MALTNGRIEEYDIQNGYQNTEEIKKLPAELNFPVDFDKMPTFIFQEERQKLDLPLSDSEENQFHDFSDSKLSLGFEIGRSKEKFVDEKPFYSNKEPLKINSWKKSSSHPKSKEVSNGLLKVSTPPTEFVKRENAGIRRRSSNQGSFALEAPKILKRDAMFKESWKNKCFISPQKDNQGFSKSKHLSTYEGETENGFSTSTEEEEEEEEDIVSASWVDNLDMDMASFNSHRERFLTEHVNMDERSDDDFLLGLISSDSSVDDHDNEQDDVDLIGWECFFDDSSDELNTLSHQADDEGDTTDEETPELQNNKLLNLSTPKKSFGQTPRIKTELSESPNSQRTLLSAVPTPLELSAELAYKEDLTSLASRANISDNSTGLTPTLAKATLAQPVSTVVSVASFELDPRLNITQPKPPVMGTWAKEPNHLIGIIDGKHSHSLHHDKFDACTKGENTANNGYGPQTLNETSEEPSLDDILDTSLLQPSTQTDLQEENSVSFAQEDNSLSRWEKIPIGTFRKNQYIKSMARRDELIRDEWFTLAIKTREKRRHKINATGMTTTNSVPLRPKSRKARRALKKKARKMTFRQMHSDFQSALEDEHNDGSYLDNDYETVGLGLGPELSPLFEILESSGY</sequence>
<name>YD4B_SCHPO</name>
<reference key="1">
    <citation type="journal article" date="2002" name="Nature">
        <title>The genome sequence of Schizosaccharomyces pombe.</title>
        <authorList>
            <person name="Wood V."/>
            <person name="Gwilliam R."/>
            <person name="Rajandream M.A."/>
            <person name="Lyne M.H."/>
            <person name="Lyne R."/>
            <person name="Stewart A."/>
            <person name="Sgouros J.G."/>
            <person name="Peat N."/>
            <person name="Hayles J."/>
            <person name="Baker S.G."/>
            <person name="Basham D."/>
            <person name="Bowman S."/>
            <person name="Brooks K."/>
            <person name="Brown D."/>
            <person name="Brown S."/>
            <person name="Chillingworth T."/>
            <person name="Churcher C.M."/>
            <person name="Collins M."/>
            <person name="Connor R."/>
            <person name="Cronin A."/>
            <person name="Davis P."/>
            <person name="Feltwell T."/>
            <person name="Fraser A."/>
            <person name="Gentles S."/>
            <person name="Goble A."/>
            <person name="Hamlin N."/>
            <person name="Harris D.E."/>
            <person name="Hidalgo J."/>
            <person name="Hodgson G."/>
            <person name="Holroyd S."/>
            <person name="Hornsby T."/>
            <person name="Howarth S."/>
            <person name="Huckle E.J."/>
            <person name="Hunt S."/>
            <person name="Jagels K."/>
            <person name="James K.D."/>
            <person name="Jones L."/>
            <person name="Jones M."/>
            <person name="Leather S."/>
            <person name="McDonald S."/>
            <person name="McLean J."/>
            <person name="Mooney P."/>
            <person name="Moule S."/>
            <person name="Mungall K.L."/>
            <person name="Murphy L.D."/>
            <person name="Niblett D."/>
            <person name="Odell C."/>
            <person name="Oliver K."/>
            <person name="O'Neil S."/>
            <person name="Pearson D."/>
            <person name="Quail M.A."/>
            <person name="Rabbinowitsch E."/>
            <person name="Rutherford K.M."/>
            <person name="Rutter S."/>
            <person name="Saunders D."/>
            <person name="Seeger K."/>
            <person name="Sharp S."/>
            <person name="Skelton J."/>
            <person name="Simmonds M.N."/>
            <person name="Squares R."/>
            <person name="Squares S."/>
            <person name="Stevens K."/>
            <person name="Taylor K."/>
            <person name="Taylor R.G."/>
            <person name="Tivey A."/>
            <person name="Walsh S.V."/>
            <person name="Warren T."/>
            <person name="Whitehead S."/>
            <person name="Woodward J.R."/>
            <person name="Volckaert G."/>
            <person name="Aert R."/>
            <person name="Robben J."/>
            <person name="Grymonprez B."/>
            <person name="Weltjens I."/>
            <person name="Vanstreels E."/>
            <person name="Rieger M."/>
            <person name="Schaefer M."/>
            <person name="Mueller-Auer S."/>
            <person name="Gabel C."/>
            <person name="Fuchs M."/>
            <person name="Duesterhoeft A."/>
            <person name="Fritzc C."/>
            <person name="Holzer E."/>
            <person name="Moestl D."/>
            <person name="Hilbert H."/>
            <person name="Borzym K."/>
            <person name="Langer I."/>
            <person name="Beck A."/>
            <person name="Lehrach H."/>
            <person name="Reinhardt R."/>
            <person name="Pohl T.M."/>
            <person name="Eger P."/>
            <person name="Zimmermann W."/>
            <person name="Wedler H."/>
            <person name="Wambutt R."/>
            <person name="Purnelle B."/>
            <person name="Goffeau A."/>
            <person name="Cadieu E."/>
            <person name="Dreano S."/>
            <person name="Gloux S."/>
            <person name="Lelaure V."/>
            <person name="Mottier S."/>
            <person name="Galibert F."/>
            <person name="Aves S.J."/>
            <person name="Xiang Z."/>
            <person name="Hunt C."/>
            <person name="Moore K."/>
            <person name="Hurst S.M."/>
            <person name="Lucas M."/>
            <person name="Rochet M."/>
            <person name="Gaillardin C."/>
            <person name="Tallada V.A."/>
            <person name="Garzon A."/>
            <person name="Thode G."/>
            <person name="Daga R.R."/>
            <person name="Cruzado L."/>
            <person name="Jimenez J."/>
            <person name="Sanchez M."/>
            <person name="del Rey F."/>
            <person name="Benito J."/>
            <person name="Dominguez A."/>
            <person name="Revuelta J.L."/>
            <person name="Moreno S."/>
            <person name="Armstrong J."/>
            <person name="Forsburg S.L."/>
            <person name="Cerutti L."/>
            <person name="Lowe T."/>
            <person name="McCombie W.R."/>
            <person name="Paulsen I."/>
            <person name="Potashkin J."/>
            <person name="Shpakovski G.V."/>
            <person name="Ussery D."/>
            <person name="Barrell B.G."/>
            <person name="Nurse P."/>
        </authorList>
    </citation>
    <scope>NUCLEOTIDE SEQUENCE [LARGE SCALE GENOMIC DNA]</scope>
    <source>
        <strain>972 / ATCC 24843</strain>
    </source>
</reference>
<reference key="2">
    <citation type="journal article" date="2008" name="J. Proteome Res.">
        <title>Phosphoproteome analysis of fission yeast.</title>
        <authorList>
            <person name="Wilson-Grady J.T."/>
            <person name="Villen J."/>
            <person name="Gygi S.P."/>
        </authorList>
    </citation>
    <scope>PHOSPHORYLATION [LARGE SCALE ANALYSIS] AT SER-334</scope>
    <scope>IDENTIFICATION BY MASS SPECTROMETRY</scope>
</reference>
<feature type="chain" id="PRO_0000116583" description="Uncharacterized protein C22H10.11c">
    <location>
        <begin position="1"/>
        <end position="629"/>
    </location>
</feature>
<feature type="region of interest" description="Disordered" evidence="1">
    <location>
        <begin position="101"/>
        <end position="126"/>
    </location>
</feature>
<feature type="region of interest" description="Disordered" evidence="1">
    <location>
        <begin position="172"/>
        <end position="209"/>
    </location>
</feature>
<feature type="region of interest" description="Disordered" evidence="1">
    <location>
        <begin position="315"/>
        <end position="339"/>
    </location>
</feature>
<feature type="region of interest" description="Disordered" evidence="1">
    <location>
        <begin position="448"/>
        <end position="468"/>
    </location>
</feature>
<feature type="compositionally biased region" description="Acidic residues" evidence="1">
    <location>
        <begin position="200"/>
        <end position="209"/>
    </location>
</feature>
<feature type="compositionally biased region" description="Polar residues" evidence="1">
    <location>
        <begin position="448"/>
        <end position="463"/>
    </location>
</feature>
<feature type="modified residue" description="Phosphoserine" evidence="2">
    <location>
        <position position="334"/>
    </location>
</feature>
<organism>
    <name type="scientific">Schizosaccharomyces pombe (strain 972 / ATCC 24843)</name>
    <name type="common">Fission yeast</name>
    <dbReference type="NCBI Taxonomy" id="284812"/>
    <lineage>
        <taxon>Eukaryota</taxon>
        <taxon>Fungi</taxon>
        <taxon>Dikarya</taxon>
        <taxon>Ascomycota</taxon>
        <taxon>Taphrinomycotina</taxon>
        <taxon>Schizosaccharomycetes</taxon>
        <taxon>Schizosaccharomycetales</taxon>
        <taxon>Schizosaccharomycetaceae</taxon>
        <taxon>Schizosaccharomyces</taxon>
    </lineage>
</organism>
<evidence type="ECO:0000256" key="1">
    <source>
        <dbReference type="SAM" id="MobiDB-lite"/>
    </source>
</evidence>
<evidence type="ECO:0000269" key="2">
    <source>
    </source>
</evidence>
<dbReference type="EMBL" id="CU329670">
    <property type="protein sequence ID" value="CAA93611.1"/>
    <property type="molecule type" value="Genomic_DNA"/>
</dbReference>
<dbReference type="PIR" id="T38214">
    <property type="entry name" value="T38214"/>
</dbReference>
<dbReference type="SMR" id="Q10304"/>
<dbReference type="BioGRID" id="278224">
    <property type="interactions" value="7"/>
</dbReference>
<dbReference type="STRING" id="284812.Q10304"/>
<dbReference type="iPTMnet" id="Q10304"/>
<dbReference type="PaxDb" id="4896-SPAC22H10.11c.1"/>
<dbReference type="EnsemblFungi" id="SPAC22H10.11c.1">
    <property type="protein sequence ID" value="SPAC22H10.11c.1:pep"/>
    <property type="gene ID" value="SPAC22H10.11c"/>
</dbReference>
<dbReference type="KEGG" id="spo:2541730"/>
<dbReference type="PomBase" id="SPAC22H10.11c"/>
<dbReference type="VEuPathDB" id="FungiDB:SPAC22H10.11c"/>
<dbReference type="eggNOG" id="ENOG502QQB6">
    <property type="taxonomic scope" value="Eukaryota"/>
</dbReference>
<dbReference type="HOGENOM" id="CLU_430305_0_0_1"/>
<dbReference type="InParanoid" id="Q10304"/>
<dbReference type="OMA" id="YIKSMAR"/>
<dbReference type="PRO" id="PR:Q10304"/>
<dbReference type="Proteomes" id="UP000002485">
    <property type="component" value="Chromosome I"/>
</dbReference>
<dbReference type="GO" id="GO:0005829">
    <property type="term" value="C:cytosol"/>
    <property type="evidence" value="ECO:0007005"/>
    <property type="project" value="PomBase"/>
</dbReference>
<dbReference type="GO" id="GO:0005634">
    <property type="term" value="C:nucleus"/>
    <property type="evidence" value="ECO:0000314"/>
    <property type="project" value="PomBase"/>
</dbReference>
<dbReference type="GO" id="GO:0003713">
    <property type="term" value="F:transcription coactivator activity"/>
    <property type="evidence" value="ECO:0000315"/>
    <property type="project" value="PomBase"/>
</dbReference>
<dbReference type="GO" id="GO:0003712">
    <property type="term" value="F:transcription coregulator activity"/>
    <property type="evidence" value="ECO:0000318"/>
    <property type="project" value="GO_Central"/>
</dbReference>
<dbReference type="GO" id="GO:0060963">
    <property type="term" value="P:positive regulation of ribosomal protein gene transcription by RNA polymerase II"/>
    <property type="evidence" value="ECO:0000315"/>
    <property type="project" value="PomBase"/>
</dbReference>
<dbReference type="GO" id="GO:0090070">
    <property type="term" value="P:positive regulation of ribosome biogenesis"/>
    <property type="evidence" value="ECO:0000315"/>
    <property type="project" value="PomBase"/>
</dbReference>
<dbReference type="GO" id="GO:0006357">
    <property type="term" value="P:regulation of transcription by RNA polymerase II"/>
    <property type="evidence" value="ECO:0000318"/>
    <property type="project" value="GO_Central"/>
</dbReference>
<dbReference type="InterPro" id="IPR018837">
    <property type="entry name" value="TF_CRF1/IFH1"/>
</dbReference>
<dbReference type="PANTHER" id="PTHR28057">
    <property type="entry name" value="PROTEIN IFH1-RELATED"/>
    <property type="match status" value="1"/>
</dbReference>
<dbReference type="PANTHER" id="PTHR28057:SF1">
    <property type="entry name" value="PROTEIN IFH1-RELATED"/>
    <property type="match status" value="1"/>
</dbReference>
<dbReference type="Pfam" id="PF10380">
    <property type="entry name" value="CRF1"/>
    <property type="match status" value="1"/>
</dbReference>
<protein>
    <recommendedName>
        <fullName>Uncharacterized protein C22H10.11c</fullName>
    </recommendedName>
</protein>
<keyword id="KW-0597">Phosphoprotein</keyword>
<keyword id="KW-1185">Reference proteome</keyword>